<sequence length="174" mass="19252">MSKVFLLLVLSVFALVSCDALSAPVGSKLSLSKTDELNAQPIDAKRMLRAQEEPTNAADEERGMTELANKFKAWAAAIKTWVTNSKLVQSMNNKLASLTQKGRVGQIEKLLKQDNVNVNVLYQNKVKPDELFLALKLDPKLKLIADAPAAWANNPGLSMFYQYATYYAKMTTKA</sequence>
<name>RL207_PHYCP</name>
<dbReference type="EMBL" id="MK530529">
    <property type="protein sequence ID" value="QBF53359.1"/>
    <property type="molecule type" value="Genomic_DNA"/>
</dbReference>
<dbReference type="VEuPathDB" id="FungiDB:DVH05_002571"/>
<dbReference type="OrthoDB" id="127754at2759"/>
<dbReference type="PHI-base" id="PHI:8809"/>
<dbReference type="GO" id="GO:0005576">
    <property type="term" value="C:extracellular region"/>
    <property type="evidence" value="ECO:0007669"/>
    <property type="project" value="UniProtKB-SubCell"/>
</dbReference>
<dbReference type="GO" id="GO:0020002">
    <property type="term" value="C:host cell plasma membrane"/>
    <property type="evidence" value="ECO:0007669"/>
    <property type="project" value="UniProtKB-SubCell"/>
</dbReference>
<dbReference type="GO" id="GO:0016020">
    <property type="term" value="C:membrane"/>
    <property type="evidence" value="ECO:0007669"/>
    <property type="project" value="UniProtKB-KW"/>
</dbReference>
<keyword id="KW-1032">Host cell membrane</keyword>
<keyword id="KW-1043">Host membrane</keyword>
<keyword id="KW-0472">Membrane</keyword>
<keyword id="KW-0964">Secreted</keyword>
<keyword id="KW-0732">Signal</keyword>
<keyword id="KW-0843">Virulence</keyword>
<proteinExistence type="evidence at protein level"/>
<organism>
    <name type="scientific">Phytophthora capsici</name>
    <dbReference type="NCBI Taxonomy" id="4784"/>
    <lineage>
        <taxon>Eukaryota</taxon>
        <taxon>Sar</taxon>
        <taxon>Stramenopiles</taxon>
        <taxon>Oomycota</taxon>
        <taxon>Peronosporales</taxon>
        <taxon>Peronosporaceae</taxon>
        <taxon>Phytophthora</taxon>
    </lineage>
</organism>
<protein>
    <recommendedName>
        <fullName evidence="5">RxLR effector protein 207</fullName>
    </recommendedName>
    <alternativeName>
        <fullName evidence="4">Avirulence protein homolog 207</fullName>
    </alternativeName>
</protein>
<reference key="1">
    <citation type="journal article" date="2019" name="Mol. Plant">
        <title>A Phytophthora capsici effector targets ACD11 binding partners that regulate ROS-mediated defense response in Arabidopsis.</title>
        <authorList>
            <person name="Li Q."/>
            <person name="Ai G."/>
            <person name="Shen D."/>
            <person name="Zou F."/>
            <person name="Wang J."/>
            <person name="Bai T."/>
            <person name="Chen Y."/>
            <person name="Li S."/>
            <person name="Zhang M."/>
            <person name="Jing M."/>
            <person name="Dou D."/>
        </authorList>
    </citation>
    <scope>NUCLEOTIDE SEQUENCE [GENOMIC DNA]</scope>
    <scope>FUNCTION</scope>
    <scope>DISRUPTION PHENOTYPE</scope>
    <scope>INDUCTION</scope>
    <scope>INTERACTION WITH HOST ACD11; BPA1; BPL1; BPL2; BPL3 AND BPL4</scope>
    <scope>SUBCELLULAR LOCATION</scope>
    <source>
        <strain>LT263</strain>
    </source>
</reference>
<reference key="2">
    <citation type="journal article" date="2017" name="Fungal Biol.">
        <title>Intrinsic disorder is a common structural characteristic of RxLR effectors in oomycete pathogens.</title>
        <authorList>
            <person name="Shen D."/>
            <person name="Li Q."/>
            <person name="Sun P."/>
            <person name="Zhang M."/>
            <person name="Dou D."/>
        </authorList>
    </citation>
    <scope>DOMAIN</scope>
    <scope>FUNCTION</scope>
    <scope>MUTAGENESIS OF LYS-86 AND LYS-94</scope>
</reference>
<gene>
    <name evidence="5" type="primary">RxLR207</name>
    <name evidence="4" type="synonym">Avh207</name>
</gene>
<accession>A0A411NN20</accession>
<feature type="signal peptide" evidence="1">
    <location>
        <begin position="1"/>
        <end position="20"/>
    </location>
</feature>
<feature type="chain" id="PRO_5019054076" description="RxLR effector protein 207">
    <location>
        <begin position="21"/>
        <end position="174"/>
    </location>
</feature>
<feature type="region of interest" description="Disordered" evidence="7">
    <location>
        <begin position="82"/>
        <end position="99"/>
    </location>
</feature>
<feature type="short sequence motif" description="RxLR-dEER" evidence="8">
    <location>
        <begin position="46"/>
        <end position="62"/>
    </location>
</feature>
<feature type="mutagenesis site" description="Leads to the transition from disordered structure to ordered structure and abolishes the function in cell death activation; when associated with A-94." evidence="2">
    <original>K</original>
    <variation>F</variation>
    <location>
        <position position="86"/>
    </location>
</feature>
<feature type="mutagenesis site" description="Leads to the transition from disordered structure to ordered structure and abolishes the function in cell death activation; when associated with A-86." evidence="2">
    <original>K</original>
    <variation>F</variation>
    <location>
        <position position="94"/>
    </location>
</feature>
<evidence type="ECO:0000255" key="1"/>
<evidence type="ECO:0000269" key="2">
    <source>
    </source>
</evidence>
<evidence type="ECO:0000269" key="3">
    <source>
    </source>
</evidence>
<evidence type="ECO:0000303" key="4">
    <source>
    </source>
</evidence>
<evidence type="ECO:0000303" key="5">
    <source>
    </source>
</evidence>
<evidence type="ECO:0000305" key="6"/>
<evidence type="ECO:0000305" key="7">
    <source>
    </source>
</evidence>
<evidence type="ECO:0000305" key="8">
    <source>
    </source>
</evidence>
<comment type="function">
    <text evidence="2 3">Secreted effector that activates ROS-mediated cell death in plant host and is essential for virulence (PubMed:29029698, PubMed:30703564). Plays a role in the transition from the biotrophic to necrotrophic stage (PubMed:30703564). Associates with and promotes the degradation of Nicotiana benthamiana BPA1, BPL1, BPL2, and BPL4 to disrupt ACD11 stabilization in a 26S proteasome-dependent manner (PubMed:30703564).</text>
</comment>
<comment type="subunit">
    <text evidence="3">Interacts with Nicotiana benthamiana ACD11, BPA1 (binding partner of ACD11), as well as BPA-like proteins BPL1, BPL2, BPL3 and BPL4.</text>
</comment>
<comment type="subcellular location">
    <subcellularLocation>
        <location evidence="3">Secreted</location>
    </subcellularLocation>
    <subcellularLocation>
        <location evidence="3">Host cell membrane</location>
    </subcellularLocation>
</comment>
<comment type="induction">
    <text evidence="3">Expression is induced at 9-18 hours post-infiltration (hpi).</text>
</comment>
<comment type="domain">
    <text evidence="8">The RxLR-dEER motif acts to carry the protein into the host cell cytoplasm through binding to cell surface phosphatidylinositol-3-phosphate.</text>
</comment>
<comment type="domain">
    <text evidence="2">The disordered structure between residues 82 and 99 contributes to the effector function in cell death activation.</text>
</comment>
<comment type="disruption phenotype">
    <text evidence="3">Exhibits significantly reduced virulence with smaller lesions on Nicotiana benthamiana infected leaves.</text>
</comment>
<comment type="similarity">
    <text evidence="6">Belongs to the RxLR effector family.</text>
</comment>